<comment type="subcellular location">
    <subcellularLocation>
        <location evidence="3">Endoplasmic reticulum</location>
    </subcellularLocation>
    <subcellularLocation>
        <location evidence="3">Golgi apparatus</location>
    </subcellularLocation>
    <subcellularLocation>
        <location evidence="1">Membrane</location>
        <topology evidence="1">Multi-pass membrane protein</topology>
    </subcellularLocation>
    <text evidence="1 3">Barrier septum. Cell tip.</text>
</comment>
<comment type="similarity">
    <text evidence="1">Belongs to the major facilitator superfamily. CAR1 family.</text>
</comment>
<proteinExistence type="inferred from homology"/>
<keyword id="KW-0256">Endoplasmic reticulum</keyword>
<keyword id="KW-0333">Golgi apparatus</keyword>
<keyword id="KW-0472">Membrane</keyword>
<keyword id="KW-1185">Reference proteome</keyword>
<keyword id="KW-0812">Transmembrane</keyword>
<keyword id="KW-1133">Transmembrane helix</keyword>
<keyword id="KW-0813">Transport</keyword>
<organism>
    <name type="scientific">Schizosaccharomyces pombe (strain 972 / ATCC 24843)</name>
    <name type="common">Fission yeast</name>
    <dbReference type="NCBI Taxonomy" id="284812"/>
    <lineage>
        <taxon>Eukaryota</taxon>
        <taxon>Fungi</taxon>
        <taxon>Dikarya</taxon>
        <taxon>Ascomycota</taxon>
        <taxon>Taphrinomycotina</taxon>
        <taxon>Schizosaccharomycetes</taxon>
        <taxon>Schizosaccharomycetales</taxon>
        <taxon>Schizosaccharomycetaceae</taxon>
        <taxon>Schizosaccharomyces</taxon>
    </lineage>
</organism>
<evidence type="ECO:0000255" key="1"/>
<evidence type="ECO:0000256" key="2">
    <source>
        <dbReference type="SAM" id="MobiDB-lite"/>
    </source>
</evidence>
<evidence type="ECO:0000269" key="3">
    <source>
    </source>
</evidence>
<evidence type="ECO:0000305" key="4"/>
<evidence type="ECO:0000312" key="5">
    <source>
        <dbReference type="EMBL" id="CAA19073.1"/>
    </source>
</evidence>
<feature type="chain" id="PRO_0000372788" description="Uncharacterized transporter C965.13">
    <location>
        <begin position="1"/>
        <end position="537"/>
    </location>
</feature>
<feature type="transmembrane region" description="Helical" evidence="1">
    <location>
        <begin position="90"/>
        <end position="110"/>
    </location>
</feature>
<feature type="transmembrane region" description="Helical" evidence="1">
    <location>
        <begin position="133"/>
        <end position="153"/>
    </location>
</feature>
<feature type="transmembrane region" description="Helical" evidence="1">
    <location>
        <begin position="156"/>
        <end position="176"/>
    </location>
</feature>
<feature type="transmembrane region" description="Helical" evidence="1">
    <location>
        <begin position="180"/>
        <end position="200"/>
    </location>
</feature>
<feature type="transmembrane region" description="Helical" evidence="1">
    <location>
        <begin position="213"/>
        <end position="233"/>
    </location>
</feature>
<feature type="transmembrane region" description="Helical" evidence="1">
    <location>
        <begin position="243"/>
        <end position="263"/>
    </location>
</feature>
<feature type="transmembrane region" description="Helical" evidence="1">
    <location>
        <begin position="313"/>
        <end position="333"/>
    </location>
</feature>
<feature type="transmembrane region" description="Helical" evidence="1">
    <location>
        <begin position="348"/>
        <end position="368"/>
    </location>
</feature>
<feature type="transmembrane region" description="Helical" evidence="1">
    <location>
        <begin position="393"/>
        <end position="413"/>
    </location>
</feature>
<feature type="transmembrane region" description="Helical" evidence="1">
    <location>
        <begin position="422"/>
        <end position="442"/>
    </location>
</feature>
<feature type="transmembrane region" description="Helical" evidence="1">
    <location>
        <begin position="457"/>
        <end position="477"/>
    </location>
</feature>
<feature type="transmembrane region" description="Helical" evidence="1">
    <location>
        <begin position="492"/>
        <end position="512"/>
    </location>
</feature>
<feature type="region of interest" description="Disordered" evidence="2">
    <location>
        <begin position="10"/>
        <end position="56"/>
    </location>
</feature>
<feature type="compositionally biased region" description="Basic and acidic residues" evidence="2">
    <location>
        <begin position="31"/>
        <end position="46"/>
    </location>
</feature>
<protein>
    <recommendedName>
        <fullName>Uncharacterized transporter C965.13</fullName>
    </recommendedName>
</protein>
<reference evidence="5" key="1">
    <citation type="journal article" date="2002" name="Nature">
        <title>The genome sequence of Schizosaccharomyces pombe.</title>
        <authorList>
            <person name="Wood V."/>
            <person name="Gwilliam R."/>
            <person name="Rajandream M.A."/>
            <person name="Lyne M.H."/>
            <person name="Lyne R."/>
            <person name="Stewart A."/>
            <person name="Sgouros J.G."/>
            <person name="Peat N."/>
            <person name="Hayles J."/>
            <person name="Baker S.G."/>
            <person name="Basham D."/>
            <person name="Bowman S."/>
            <person name="Brooks K."/>
            <person name="Brown D."/>
            <person name="Brown S."/>
            <person name="Chillingworth T."/>
            <person name="Churcher C.M."/>
            <person name="Collins M."/>
            <person name="Connor R."/>
            <person name="Cronin A."/>
            <person name="Davis P."/>
            <person name="Feltwell T."/>
            <person name="Fraser A."/>
            <person name="Gentles S."/>
            <person name="Goble A."/>
            <person name="Hamlin N."/>
            <person name="Harris D.E."/>
            <person name="Hidalgo J."/>
            <person name="Hodgson G."/>
            <person name="Holroyd S."/>
            <person name="Hornsby T."/>
            <person name="Howarth S."/>
            <person name="Huckle E.J."/>
            <person name="Hunt S."/>
            <person name="Jagels K."/>
            <person name="James K.D."/>
            <person name="Jones L."/>
            <person name="Jones M."/>
            <person name="Leather S."/>
            <person name="McDonald S."/>
            <person name="McLean J."/>
            <person name="Mooney P."/>
            <person name="Moule S."/>
            <person name="Mungall K.L."/>
            <person name="Murphy L.D."/>
            <person name="Niblett D."/>
            <person name="Odell C."/>
            <person name="Oliver K."/>
            <person name="O'Neil S."/>
            <person name="Pearson D."/>
            <person name="Quail M.A."/>
            <person name="Rabbinowitsch E."/>
            <person name="Rutherford K.M."/>
            <person name="Rutter S."/>
            <person name="Saunders D."/>
            <person name="Seeger K."/>
            <person name="Sharp S."/>
            <person name="Skelton J."/>
            <person name="Simmonds M.N."/>
            <person name="Squares R."/>
            <person name="Squares S."/>
            <person name="Stevens K."/>
            <person name="Taylor K."/>
            <person name="Taylor R.G."/>
            <person name="Tivey A."/>
            <person name="Walsh S.V."/>
            <person name="Warren T."/>
            <person name="Whitehead S."/>
            <person name="Woodward J.R."/>
            <person name="Volckaert G."/>
            <person name="Aert R."/>
            <person name="Robben J."/>
            <person name="Grymonprez B."/>
            <person name="Weltjens I."/>
            <person name="Vanstreels E."/>
            <person name="Rieger M."/>
            <person name="Schaefer M."/>
            <person name="Mueller-Auer S."/>
            <person name="Gabel C."/>
            <person name="Fuchs M."/>
            <person name="Duesterhoeft A."/>
            <person name="Fritzc C."/>
            <person name="Holzer E."/>
            <person name="Moestl D."/>
            <person name="Hilbert H."/>
            <person name="Borzym K."/>
            <person name="Langer I."/>
            <person name="Beck A."/>
            <person name="Lehrach H."/>
            <person name="Reinhardt R."/>
            <person name="Pohl T.M."/>
            <person name="Eger P."/>
            <person name="Zimmermann W."/>
            <person name="Wedler H."/>
            <person name="Wambutt R."/>
            <person name="Purnelle B."/>
            <person name="Goffeau A."/>
            <person name="Cadieu E."/>
            <person name="Dreano S."/>
            <person name="Gloux S."/>
            <person name="Lelaure V."/>
            <person name="Mottier S."/>
            <person name="Galibert F."/>
            <person name="Aves S.J."/>
            <person name="Xiang Z."/>
            <person name="Hunt C."/>
            <person name="Moore K."/>
            <person name="Hurst S.M."/>
            <person name="Lucas M."/>
            <person name="Rochet M."/>
            <person name="Gaillardin C."/>
            <person name="Tallada V.A."/>
            <person name="Garzon A."/>
            <person name="Thode G."/>
            <person name="Daga R.R."/>
            <person name="Cruzado L."/>
            <person name="Jimenez J."/>
            <person name="Sanchez M."/>
            <person name="del Rey F."/>
            <person name="Benito J."/>
            <person name="Dominguez A."/>
            <person name="Revuelta J.L."/>
            <person name="Moreno S."/>
            <person name="Armstrong J."/>
            <person name="Forsburg S.L."/>
            <person name="Cerutti L."/>
            <person name="Lowe T."/>
            <person name="McCombie W.R."/>
            <person name="Paulsen I."/>
            <person name="Potashkin J."/>
            <person name="Shpakovski G.V."/>
            <person name="Ussery D."/>
            <person name="Barrell B.G."/>
            <person name="Nurse P."/>
        </authorList>
    </citation>
    <scope>NUCLEOTIDE SEQUENCE [LARGE SCALE GENOMIC DNA]</scope>
    <source>
        <strain>972 / ATCC 24843</strain>
    </source>
</reference>
<reference evidence="4" key="2">
    <citation type="journal article" date="2006" name="Nat. Biotechnol.">
        <title>ORFeome cloning and global analysis of protein localization in the fission yeast Schizosaccharomyces pombe.</title>
        <authorList>
            <person name="Matsuyama A."/>
            <person name="Arai R."/>
            <person name="Yashiroda Y."/>
            <person name="Shirai A."/>
            <person name="Kamata A."/>
            <person name="Sekido S."/>
            <person name="Kobayashi Y."/>
            <person name="Hashimoto A."/>
            <person name="Hamamoto M."/>
            <person name="Hiraoka Y."/>
            <person name="Horinouchi S."/>
            <person name="Yoshida M."/>
        </authorList>
    </citation>
    <scope>SUBCELLULAR LOCATION [LARGE SCALE ANALYSIS]</scope>
</reference>
<sequence>MSILNVIRSHHDVEPQNVEEEPPLTGQTIVTEDKLETSAKDKKHESPSMSEDEEGSVENVDAWDLTKALMSIDPNHPAHPHKWPLWKKLFVATVYTFLEVYVIWSSTACINFFDIYQTNWHCSIQVSYLVQSLFIVGNAFGPMLLGPMSDIFGRKWVYVGSLILYIIFQIPQALAYNLPMMAINSAIAGAFGSSALANVASSMCDIFTPETVGFGISLFVWGANAGASIGSPIGEALYDHWRWFYWMNMIVGGFFVILCVLCPETLPVINIMNYSSTTGEKTVQVSTLAKAKSAVVRTKFVLSTAFKLLCTEPIIMALGLYNGFAYGLIFLYLDGLFPVFVDNYKMGYMGANLTYLNFLVGVTIVVMLQPIQNWLYRWDKRRHGGVARPEARFLISLLTVWFFPAGLFWFAFTSDGRISWVSPLIAGGVLGVGDPQLWLAMINYITDSYPSVAGSAIAAFTLPSFAIAAVLVHLGIIMFDNMTTTWAMATLAFISLSLVATIYVIYFFGHLIRKHSRLAVTQQALQEAHDAKVLPEV</sequence>
<dbReference type="EMBL" id="CU329672">
    <property type="protein sequence ID" value="CAA19073.1"/>
    <property type="molecule type" value="Genomic_DNA"/>
</dbReference>
<dbReference type="PIR" id="T41666">
    <property type="entry name" value="T41666"/>
</dbReference>
<dbReference type="RefSeq" id="NP_588523.1">
    <property type="nucleotide sequence ID" value="NM_001023512.2"/>
</dbReference>
<dbReference type="SMR" id="O59833"/>
<dbReference type="BioGRID" id="275536">
    <property type="interactions" value="21"/>
</dbReference>
<dbReference type="FunCoup" id="O59833">
    <property type="interactions" value="7"/>
</dbReference>
<dbReference type="STRING" id="284812.O59833"/>
<dbReference type="iPTMnet" id="O59833"/>
<dbReference type="SwissPalm" id="O59833"/>
<dbReference type="PaxDb" id="4896-SPCC965.13.1"/>
<dbReference type="EnsemblFungi" id="SPCC965.13.1">
    <property type="protein sequence ID" value="SPCC965.13.1:pep"/>
    <property type="gene ID" value="SPCC965.13"/>
</dbReference>
<dbReference type="KEGG" id="spo:2538962"/>
<dbReference type="PomBase" id="SPCC965.13"/>
<dbReference type="VEuPathDB" id="FungiDB:SPCC965.13"/>
<dbReference type="eggNOG" id="KOG0255">
    <property type="taxonomic scope" value="Eukaryota"/>
</dbReference>
<dbReference type="HOGENOM" id="CLU_008455_11_5_1"/>
<dbReference type="InParanoid" id="O59833"/>
<dbReference type="OMA" id="WFAFTSS"/>
<dbReference type="PhylomeDB" id="O59833"/>
<dbReference type="PRO" id="PR:O59833"/>
<dbReference type="Proteomes" id="UP000002485">
    <property type="component" value="Chromosome III"/>
</dbReference>
<dbReference type="GO" id="GO:0032153">
    <property type="term" value="C:cell division site"/>
    <property type="evidence" value="ECO:0007005"/>
    <property type="project" value="PomBase"/>
</dbReference>
<dbReference type="GO" id="GO:0051286">
    <property type="term" value="C:cell tip"/>
    <property type="evidence" value="ECO:0007005"/>
    <property type="project" value="PomBase"/>
</dbReference>
<dbReference type="GO" id="GO:0005783">
    <property type="term" value="C:endoplasmic reticulum"/>
    <property type="evidence" value="ECO:0007005"/>
    <property type="project" value="PomBase"/>
</dbReference>
<dbReference type="GO" id="GO:0005794">
    <property type="term" value="C:Golgi apparatus"/>
    <property type="evidence" value="ECO:0007005"/>
    <property type="project" value="PomBase"/>
</dbReference>
<dbReference type="GO" id="GO:0005886">
    <property type="term" value="C:plasma membrane"/>
    <property type="evidence" value="ECO:0000318"/>
    <property type="project" value="GO_Central"/>
</dbReference>
<dbReference type="GO" id="GO:0031925">
    <property type="term" value="F:pyridoxal transmembrane transporter activity"/>
    <property type="evidence" value="ECO:0000250"/>
    <property type="project" value="PomBase"/>
</dbReference>
<dbReference type="GO" id="GO:0031927">
    <property type="term" value="F:pyridoxamine transmembrane transporter activity"/>
    <property type="evidence" value="ECO:0000250"/>
    <property type="project" value="PomBase"/>
</dbReference>
<dbReference type="GO" id="GO:0031928">
    <property type="term" value="F:pyridoxine transmembrane transporter activity"/>
    <property type="evidence" value="ECO:0000250"/>
    <property type="project" value="PomBase"/>
</dbReference>
<dbReference type="GO" id="GO:0022857">
    <property type="term" value="F:transmembrane transporter activity"/>
    <property type="evidence" value="ECO:0000318"/>
    <property type="project" value="GO_Central"/>
</dbReference>
<dbReference type="GO" id="GO:0140115">
    <property type="term" value="P:export across plasma membrane"/>
    <property type="evidence" value="ECO:0007669"/>
    <property type="project" value="UniProtKB-ARBA"/>
</dbReference>
<dbReference type="GO" id="GO:1903090">
    <property type="term" value="P:pyridoxal transmembrane transport"/>
    <property type="evidence" value="ECO:0000250"/>
    <property type="project" value="PomBase"/>
</dbReference>
<dbReference type="GO" id="GO:1903091">
    <property type="term" value="P:pyridoxamine transmembrane transport"/>
    <property type="evidence" value="ECO:0000250"/>
    <property type="project" value="PomBase"/>
</dbReference>
<dbReference type="GO" id="GO:1903092">
    <property type="term" value="P:pyridoxine transmembrane transport"/>
    <property type="evidence" value="ECO:0000250"/>
    <property type="project" value="PomBase"/>
</dbReference>
<dbReference type="GO" id="GO:0055085">
    <property type="term" value="P:transmembrane transport"/>
    <property type="evidence" value="ECO:0000318"/>
    <property type="project" value="GO_Central"/>
</dbReference>
<dbReference type="GO" id="GO:0042908">
    <property type="term" value="P:xenobiotic transport"/>
    <property type="evidence" value="ECO:0007669"/>
    <property type="project" value="UniProtKB-ARBA"/>
</dbReference>
<dbReference type="CDD" id="cd17323">
    <property type="entry name" value="MFS_Tpo1_MDR_like"/>
    <property type="match status" value="1"/>
</dbReference>
<dbReference type="FunFam" id="1.20.1250.20:FF:000596">
    <property type="entry name" value="Vitamin b6 transporter bsu1"/>
    <property type="match status" value="1"/>
</dbReference>
<dbReference type="Gene3D" id="1.20.1250.20">
    <property type="entry name" value="MFS general substrate transporter like domains"/>
    <property type="match status" value="1"/>
</dbReference>
<dbReference type="InterPro" id="IPR011701">
    <property type="entry name" value="MFS"/>
</dbReference>
<dbReference type="InterPro" id="IPR020846">
    <property type="entry name" value="MFS_dom"/>
</dbReference>
<dbReference type="InterPro" id="IPR036259">
    <property type="entry name" value="MFS_trans_sf"/>
</dbReference>
<dbReference type="InterPro" id="IPR005829">
    <property type="entry name" value="Sugar_transporter_CS"/>
</dbReference>
<dbReference type="PANTHER" id="PTHR23502">
    <property type="entry name" value="MAJOR FACILITATOR SUPERFAMILY"/>
    <property type="match status" value="1"/>
</dbReference>
<dbReference type="PANTHER" id="PTHR23502:SF36">
    <property type="entry name" value="MEMBRANE TRANSPORTER"/>
    <property type="match status" value="1"/>
</dbReference>
<dbReference type="Pfam" id="PF07690">
    <property type="entry name" value="MFS_1"/>
    <property type="match status" value="1"/>
</dbReference>
<dbReference type="SUPFAM" id="SSF103473">
    <property type="entry name" value="MFS general substrate transporter"/>
    <property type="match status" value="1"/>
</dbReference>
<dbReference type="PROSITE" id="PS50850">
    <property type="entry name" value="MFS"/>
    <property type="match status" value="1"/>
</dbReference>
<dbReference type="PROSITE" id="PS00216">
    <property type="entry name" value="SUGAR_TRANSPORT_1"/>
    <property type="match status" value="1"/>
</dbReference>
<gene>
    <name type="ORF">SPCC965.13</name>
</gene>
<name>YCUD_SCHPO</name>
<accession>O59833</accession>